<dbReference type="EMBL" id="CP000828">
    <property type="protein sequence ID" value="ABW27827.1"/>
    <property type="molecule type" value="Genomic_DNA"/>
</dbReference>
<dbReference type="RefSeq" id="WP_012163272.1">
    <property type="nucleotide sequence ID" value="NC_009925.1"/>
</dbReference>
<dbReference type="SMR" id="B0CA92"/>
<dbReference type="STRING" id="329726.AM1_2827"/>
<dbReference type="KEGG" id="amr:AM1_2827"/>
<dbReference type="eggNOG" id="COG0457">
    <property type="taxonomic scope" value="Bacteria"/>
</dbReference>
<dbReference type="HOGENOM" id="CLU_141248_0_0_3"/>
<dbReference type="OrthoDB" id="9429505at2"/>
<dbReference type="Proteomes" id="UP000000268">
    <property type="component" value="Chromosome"/>
</dbReference>
<dbReference type="GO" id="GO:0031676">
    <property type="term" value="C:plasma membrane-derived thylakoid membrane"/>
    <property type="evidence" value="ECO:0007669"/>
    <property type="project" value="UniProtKB-SubCell"/>
</dbReference>
<dbReference type="GO" id="GO:0015979">
    <property type="term" value="P:photosynthesis"/>
    <property type="evidence" value="ECO:0007669"/>
    <property type="project" value="UniProtKB-UniRule"/>
</dbReference>
<dbReference type="Gene3D" id="1.25.40.10">
    <property type="entry name" value="Tetratricopeptide repeat domain"/>
    <property type="match status" value="1"/>
</dbReference>
<dbReference type="HAMAP" id="MF_00439">
    <property type="entry name" value="Ycf3"/>
    <property type="match status" value="1"/>
</dbReference>
<dbReference type="InterPro" id="IPR022818">
    <property type="entry name" value="PSI_Ycf3_assembly"/>
</dbReference>
<dbReference type="InterPro" id="IPR011990">
    <property type="entry name" value="TPR-like_helical_dom_sf"/>
</dbReference>
<dbReference type="InterPro" id="IPR019734">
    <property type="entry name" value="TPR_rpt"/>
</dbReference>
<dbReference type="InterPro" id="IPR051685">
    <property type="entry name" value="Ycf3/AcsC/BcsC/TPR_MFPF"/>
</dbReference>
<dbReference type="NCBIfam" id="NF002725">
    <property type="entry name" value="PRK02603.1"/>
    <property type="match status" value="1"/>
</dbReference>
<dbReference type="PANTHER" id="PTHR44943">
    <property type="entry name" value="CELLULOSE SYNTHASE OPERON PROTEIN C"/>
    <property type="match status" value="1"/>
</dbReference>
<dbReference type="PANTHER" id="PTHR44943:SF8">
    <property type="entry name" value="TPR REPEAT-CONTAINING PROTEIN MJ0263"/>
    <property type="match status" value="1"/>
</dbReference>
<dbReference type="Pfam" id="PF00515">
    <property type="entry name" value="TPR_1"/>
    <property type="match status" value="1"/>
</dbReference>
<dbReference type="SMART" id="SM00028">
    <property type="entry name" value="TPR"/>
    <property type="match status" value="3"/>
</dbReference>
<dbReference type="SUPFAM" id="SSF48452">
    <property type="entry name" value="TPR-like"/>
    <property type="match status" value="1"/>
</dbReference>
<dbReference type="PROSITE" id="PS50005">
    <property type="entry name" value="TPR"/>
    <property type="match status" value="3"/>
</dbReference>
<dbReference type="PROSITE" id="PS50293">
    <property type="entry name" value="TPR_REGION"/>
    <property type="match status" value="1"/>
</dbReference>
<name>YCF3_ACAM1</name>
<evidence type="ECO:0000255" key="1">
    <source>
        <dbReference type="HAMAP-Rule" id="MF_00439"/>
    </source>
</evidence>
<gene>
    <name evidence="1" type="primary">ycf3</name>
    <name type="ordered locus">AM1_2827</name>
</gene>
<sequence>MPSDNFIDKAFSAMSDVVMKVIPTDQKSKDAFKYYRSGMAAQVDGNYAKALGNYTEALALEEDPFDKSYILYNMGLIFANNGDHEKALDYYHQSLELNPNLVQALYNTGVILHYKGEQAEEAAELDEAERFFDLAADFWKRAIKIAPNNYSEVQNWLKTTGRVGVG</sequence>
<comment type="function">
    <text evidence="1">Essential for the assembly of the photosystem I (PSI) complex. May act as a chaperone-like factor to guide the assembly of the PSI subunits.</text>
</comment>
<comment type="subcellular location">
    <subcellularLocation>
        <location evidence="1">Cellular thylakoid membrane</location>
        <topology evidence="1">Peripheral membrane protein</topology>
    </subcellularLocation>
</comment>
<comment type="similarity">
    <text evidence="1">Belongs to the Ycf3 family.</text>
</comment>
<proteinExistence type="inferred from homology"/>
<protein>
    <recommendedName>
        <fullName evidence="1">Photosystem I assembly protein Ycf3</fullName>
    </recommendedName>
</protein>
<accession>B0CA92</accession>
<organism>
    <name type="scientific">Acaryochloris marina (strain MBIC 11017)</name>
    <dbReference type="NCBI Taxonomy" id="329726"/>
    <lineage>
        <taxon>Bacteria</taxon>
        <taxon>Bacillati</taxon>
        <taxon>Cyanobacteriota</taxon>
        <taxon>Cyanophyceae</taxon>
        <taxon>Acaryochloridales</taxon>
        <taxon>Acaryochloridaceae</taxon>
        <taxon>Acaryochloris</taxon>
    </lineage>
</organism>
<feature type="chain" id="PRO_1000200318" description="Photosystem I assembly protein Ycf3">
    <location>
        <begin position="1"/>
        <end position="166"/>
    </location>
</feature>
<feature type="repeat" description="TPR 1">
    <location>
        <begin position="31"/>
        <end position="64"/>
    </location>
</feature>
<feature type="repeat" description="TPR 2">
    <location>
        <begin position="68"/>
        <end position="101"/>
    </location>
</feature>
<feature type="repeat" description="TPR 3">
    <location>
        <begin position="116"/>
        <end position="149"/>
    </location>
</feature>
<reference key="1">
    <citation type="journal article" date="2008" name="Proc. Natl. Acad. Sci. U.S.A.">
        <title>Niche adaptation and genome expansion in the chlorophyll d-producing cyanobacterium Acaryochloris marina.</title>
        <authorList>
            <person name="Swingley W.D."/>
            <person name="Chen M."/>
            <person name="Cheung P.C."/>
            <person name="Conrad A.L."/>
            <person name="Dejesa L.C."/>
            <person name="Hao J."/>
            <person name="Honchak B.M."/>
            <person name="Karbach L.E."/>
            <person name="Kurdoglu A."/>
            <person name="Lahiri S."/>
            <person name="Mastrian S.D."/>
            <person name="Miyashita H."/>
            <person name="Page L."/>
            <person name="Ramakrishna P."/>
            <person name="Satoh S."/>
            <person name="Sattley W.M."/>
            <person name="Shimada Y."/>
            <person name="Taylor H.L."/>
            <person name="Tomo T."/>
            <person name="Tsuchiya T."/>
            <person name="Wang Z.T."/>
            <person name="Raymond J."/>
            <person name="Mimuro M."/>
            <person name="Blankenship R.E."/>
            <person name="Touchman J.W."/>
        </authorList>
    </citation>
    <scope>NUCLEOTIDE SEQUENCE [LARGE SCALE GENOMIC DNA]</scope>
    <source>
        <strain>MBIC 11017</strain>
    </source>
</reference>
<keyword id="KW-0472">Membrane</keyword>
<keyword id="KW-0602">Photosynthesis</keyword>
<keyword id="KW-1185">Reference proteome</keyword>
<keyword id="KW-0677">Repeat</keyword>
<keyword id="KW-0793">Thylakoid</keyword>
<keyword id="KW-0802">TPR repeat</keyword>